<feature type="chain" id="PRO_0000395058" description="Probable cytokinin riboside 5'-monophosphate phosphoribohydrolase LOGL6">
    <location>
        <begin position="1"/>
        <end position="250"/>
    </location>
</feature>
<feature type="binding site" evidence="2">
    <location>
        <position position="98"/>
    </location>
    <ligand>
        <name>substrate</name>
    </ligand>
</feature>
<feature type="binding site" evidence="2">
    <location>
        <begin position="116"/>
        <end position="117"/>
    </location>
    <ligand>
        <name>substrate</name>
    </ligand>
</feature>
<feature type="binding site" evidence="2">
    <location>
        <begin position="133"/>
        <end position="139"/>
    </location>
    <ligand>
        <name>substrate</name>
    </ligand>
</feature>
<sequence length="250" mass="27494">MMDTDHTEIIKEGEAVVEAMALLQSRFRRICVFCGSSQGKKKSYQDAAVELGKELVARNIDLVYGGGSVGLMGLVSQAVYNGGRHVIGVIPKTLMPREITGETVGEVKAVADMHQRKAEMARQSDAFIALPGGYGTLEELLEVIAWAQLGIHDKPVGLLNVDGYYNSLLSFIDKAVEEEFISPSARHIIVLAPTPKELLEKLEAYSPRHDKVVPKMQWEMEKMSYCKSCEIPGLKEGNKATIQAQRGSML</sequence>
<reference key="1">
    <citation type="journal article" date="2002" name="Nature">
        <title>Sequence and analysis of rice chromosome 4.</title>
        <authorList>
            <person name="Feng Q."/>
            <person name="Zhang Y."/>
            <person name="Hao P."/>
            <person name="Wang S."/>
            <person name="Fu G."/>
            <person name="Huang Y."/>
            <person name="Li Y."/>
            <person name="Zhu J."/>
            <person name="Liu Y."/>
            <person name="Hu X."/>
            <person name="Jia P."/>
            <person name="Zhang Y."/>
            <person name="Zhao Q."/>
            <person name="Ying K."/>
            <person name="Yu S."/>
            <person name="Tang Y."/>
            <person name="Weng Q."/>
            <person name="Zhang L."/>
            <person name="Lu Y."/>
            <person name="Mu J."/>
            <person name="Lu Y."/>
            <person name="Zhang L.S."/>
            <person name="Yu Z."/>
            <person name="Fan D."/>
            <person name="Liu X."/>
            <person name="Lu T."/>
            <person name="Li C."/>
            <person name="Wu Y."/>
            <person name="Sun T."/>
            <person name="Lei H."/>
            <person name="Li T."/>
            <person name="Hu H."/>
            <person name="Guan J."/>
            <person name="Wu M."/>
            <person name="Zhang R."/>
            <person name="Zhou B."/>
            <person name="Chen Z."/>
            <person name="Chen L."/>
            <person name="Jin Z."/>
            <person name="Wang R."/>
            <person name="Yin H."/>
            <person name="Cai Z."/>
            <person name="Ren S."/>
            <person name="Lv G."/>
            <person name="Gu W."/>
            <person name="Zhu G."/>
            <person name="Tu Y."/>
            <person name="Jia J."/>
            <person name="Zhang Y."/>
            <person name="Chen J."/>
            <person name="Kang H."/>
            <person name="Chen X."/>
            <person name="Shao C."/>
            <person name="Sun Y."/>
            <person name="Hu Q."/>
            <person name="Zhang X."/>
            <person name="Zhang W."/>
            <person name="Wang L."/>
            <person name="Ding C."/>
            <person name="Sheng H."/>
            <person name="Gu J."/>
            <person name="Chen S."/>
            <person name="Ni L."/>
            <person name="Zhu F."/>
            <person name="Chen W."/>
            <person name="Lan L."/>
            <person name="Lai Y."/>
            <person name="Cheng Z."/>
            <person name="Gu M."/>
            <person name="Jiang J."/>
            <person name="Li J."/>
            <person name="Hong G."/>
            <person name="Xue Y."/>
            <person name="Han B."/>
        </authorList>
    </citation>
    <scope>NUCLEOTIDE SEQUENCE [LARGE SCALE GENOMIC DNA]</scope>
    <source>
        <strain>cv. Nipponbare</strain>
    </source>
</reference>
<reference key="2">
    <citation type="journal article" date="2005" name="Nature">
        <title>The map-based sequence of the rice genome.</title>
        <authorList>
            <consortium name="International rice genome sequencing project (IRGSP)"/>
        </authorList>
    </citation>
    <scope>NUCLEOTIDE SEQUENCE [LARGE SCALE GENOMIC DNA]</scope>
    <source>
        <strain>cv. Nipponbare</strain>
    </source>
</reference>
<reference key="3">
    <citation type="journal article" date="2008" name="Nucleic Acids Res.">
        <title>The rice annotation project database (RAP-DB): 2008 update.</title>
        <authorList>
            <consortium name="The rice annotation project (RAP)"/>
        </authorList>
    </citation>
    <scope>GENOME REANNOTATION</scope>
    <source>
        <strain>cv. Nipponbare</strain>
    </source>
</reference>
<reference key="4">
    <citation type="journal article" date="2013" name="Rice">
        <title>Improvement of the Oryza sativa Nipponbare reference genome using next generation sequence and optical map data.</title>
        <authorList>
            <person name="Kawahara Y."/>
            <person name="de la Bastide M."/>
            <person name="Hamilton J.P."/>
            <person name="Kanamori H."/>
            <person name="McCombie W.R."/>
            <person name="Ouyang S."/>
            <person name="Schwartz D.C."/>
            <person name="Tanaka T."/>
            <person name="Wu J."/>
            <person name="Zhou S."/>
            <person name="Childs K.L."/>
            <person name="Davidson R.M."/>
            <person name="Lin H."/>
            <person name="Quesada-Ocampo L."/>
            <person name="Vaillancourt B."/>
            <person name="Sakai H."/>
            <person name="Lee S.S."/>
            <person name="Kim J."/>
            <person name="Numa H."/>
            <person name="Itoh T."/>
            <person name="Buell C.R."/>
            <person name="Matsumoto T."/>
        </authorList>
    </citation>
    <scope>GENOME REANNOTATION</scope>
    <source>
        <strain>cv. Nipponbare</strain>
    </source>
</reference>
<reference key="5">
    <citation type="journal article" date="2005" name="PLoS Biol.">
        <title>The genomes of Oryza sativa: a history of duplications.</title>
        <authorList>
            <person name="Yu J."/>
            <person name="Wang J."/>
            <person name="Lin W."/>
            <person name="Li S."/>
            <person name="Li H."/>
            <person name="Zhou J."/>
            <person name="Ni P."/>
            <person name="Dong W."/>
            <person name="Hu S."/>
            <person name="Zeng C."/>
            <person name="Zhang J."/>
            <person name="Zhang Y."/>
            <person name="Li R."/>
            <person name="Xu Z."/>
            <person name="Li S."/>
            <person name="Li X."/>
            <person name="Zheng H."/>
            <person name="Cong L."/>
            <person name="Lin L."/>
            <person name="Yin J."/>
            <person name="Geng J."/>
            <person name="Li G."/>
            <person name="Shi J."/>
            <person name="Liu J."/>
            <person name="Lv H."/>
            <person name="Li J."/>
            <person name="Wang J."/>
            <person name="Deng Y."/>
            <person name="Ran L."/>
            <person name="Shi X."/>
            <person name="Wang X."/>
            <person name="Wu Q."/>
            <person name="Li C."/>
            <person name="Ren X."/>
            <person name="Wang J."/>
            <person name="Wang X."/>
            <person name="Li D."/>
            <person name="Liu D."/>
            <person name="Zhang X."/>
            <person name="Ji Z."/>
            <person name="Zhao W."/>
            <person name="Sun Y."/>
            <person name="Zhang Z."/>
            <person name="Bao J."/>
            <person name="Han Y."/>
            <person name="Dong L."/>
            <person name="Ji J."/>
            <person name="Chen P."/>
            <person name="Wu S."/>
            <person name="Liu J."/>
            <person name="Xiao Y."/>
            <person name="Bu D."/>
            <person name="Tan J."/>
            <person name="Yang L."/>
            <person name="Ye C."/>
            <person name="Zhang J."/>
            <person name="Xu J."/>
            <person name="Zhou Y."/>
            <person name="Yu Y."/>
            <person name="Zhang B."/>
            <person name="Zhuang S."/>
            <person name="Wei H."/>
            <person name="Liu B."/>
            <person name="Lei M."/>
            <person name="Yu H."/>
            <person name="Li Y."/>
            <person name="Xu H."/>
            <person name="Wei S."/>
            <person name="He X."/>
            <person name="Fang L."/>
            <person name="Zhang Z."/>
            <person name="Zhang Y."/>
            <person name="Huang X."/>
            <person name="Su Z."/>
            <person name="Tong W."/>
            <person name="Li J."/>
            <person name="Tong Z."/>
            <person name="Li S."/>
            <person name="Ye J."/>
            <person name="Wang L."/>
            <person name="Fang L."/>
            <person name="Lei T."/>
            <person name="Chen C.-S."/>
            <person name="Chen H.-C."/>
            <person name="Xu Z."/>
            <person name="Li H."/>
            <person name="Huang H."/>
            <person name="Zhang F."/>
            <person name="Xu H."/>
            <person name="Li N."/>
            <person name="Zhao C."/>
            <person name="Li S."/>
            <person name="Dong L."/>
            <person name="Huang Y."/>
            <person name="Li L."/>
            <person name="Xi Y."/>
            <person name="Qi Q."/>
            <person name="Li W."/>
            <person name="Zhang B."/>
            <person name="Hu W."/>
            <person name="Zhang Y."/>
            <person name="Tian X."/>
            <person name="Jiao Y."/>
            <person name="Liang X."/>
            <person name="Jin J."/>
            <person name="Gao L."/>
            <person name="Zheng W."/>
            <person name="Hao B."/>
            <person name="Liu S.-M."/>
            <person name="Wang W."/>
            <person name="Yuan L."/>
            <person name="Cao M."/>
            <person name="McDermott J."/>
            <person name="Samudrala R."/>
            <person name="Wang J."/>
            <person name="Wong G.K.-S."/>
            <person name="Yang H."/>
        </authorList>
    </citation>
    <scope>NUCLEOTIDE SEQUENCE [LARGE SCALE GENOMIC DNA]</scope>
    <source>
        <strain>cv. Nipponbare</strain>
    </source>
</reference>
<reference key="6">
    <citation type="journal article" date="2007" name="Nature">
        <title>Direct control of shoot meristem activity by a cytokinin-activating enzyme.</title>
        <authorList>
            <person name="Kurakawa T."/>
            <person name="Ueda N."/>
            <person name="Maekawa M."/>
            <person name="Kobayashi K."/>
            <person name="Kojima M."/>
            <person name="Nagato Y."/>
            <person name="Sakakibara H."/>
            <person name="Kyozuka J."/>
        </authorList>
    </citation>
    <scope>IDENTIFICATION</scope>
    <scope>TISSUE SPECIFICITY</scope>
</reference>
<reference key="7">
    <citation type="journal article" date="2009" name="Plant Cell">
        <title>Functional analyses of LONELY GUY cytokinin-activating enzymes reveal the importance of the direct activation pathway in Arabidopsis.</title>
        <authorList>
            <person name="Kuroha T."/>
            <person name="Tokunaga H."/>
            <person name="Kojima M."/>
            <person name="Ueda N."/>
            <person name="Ishida T."/>
            <person name="Nagawa S."/>
            <person name="Fukuda H."/>
            <person name="Sugimoto K."/>
            <person name="Sakakibara H."/>
        </authorList>
    </citation>
    <scope>GENE FAMILY</scope>
    <scope>NOMENCLATURE</scope>
</reference>
<accession>Q0JBP5</accession>
<accession>A0A0P0WCE2</accession>
<accession>Q7XKL1</accession>
<protein>
    <recommendedName>
        <fullName>Probable cytokinin riboside 5'-monophosphate phosphoribohydrolase LOGL6</fullName>
        <ecNumber>3.2.2.n1</ecNumber>
    </recommendedName>
    <alternativeName>
        <fullName>Protein LONELY GUY-like 6</fullName>
    </alternativeName>
</protein>
<keyword id="KW-0203">Cytokinin biosynthesis</keyword>
<keyword id="KW-0378">Hydrolase</keyword>
<keyword id="KW-1185">Reference proteome</keyword>
<organism>
    <name type="scientific">Oryza sativa subsp. japonica</name>
    <name type="common">Rice</name>
    <dbReference type="NCBI Taxonomy" id="39947"/>
    <lineage>
        <taxon>Eukaryota</taxon>
        <taxon>Viridiplantae</taxon>
        <taxon>Streptophyta</taxon>
        <taxon>Embryophyta</taxon>
        <taxon>Tracheophyta</taxon>
        <taxon>Spermatophyta</taxon>
        <taxon>Magnoliopsida</taxon>
        <taxon>Liliopsida</taxon>
        <taxon>Poales</taxon>
        <taxon>Poaceae</taxon>
        <taxon>BOP clade</taxon>
        <taxon>Oryzoideae</taxon>
        <taxon>Oryzeae</taxon>
        <taxon>Oryzinae</taxon>
        <taxon>Oryza</taxon>
        <taxon>Oryza sativa</taxon>
    </lineage>
</organism>
<comment type="function">
    <text evidence="1">Cytokinin-activating enzyme working in the direct activation pathway. Phosphoribohydrolase that converts inactive cytokinin nucleotides to the biologically active free-base forms (By similarity).</text>
</comment>
<comment type="catalytic activity">
    <reaction>
        <text>N(6)-(dimethylallyl)adenosine 5'-phosphate + H2O = N(6)-dimethylallyladenine + D-ribose 5-phosphate</text>
        <dbReference type="Rhea" id="RHEA:48560"/>
        <dbReference type="ChEBI" id="CHEBI:15377"/>
        <dbReference type="ChEBI" id="CHEBI:17660"/>
        <dbReference type="ChEBI" id="CHEBI:57526"/>
        <dbReference type="ChEBI" id="CHEBI:78346"/>
        <dbReference type="EC" id="3.2.2.n1"/>
    </reaction>
</comment>
<comment type="catalytic activity">
    <reaction>
        <text>9-ribosyl-trans-zeatin 5'-phosphate + H2O = trans-zeatin + D-ribose 5-phosphate</text>
        <dbReference type="Rhea" id="RHEA:48564"/>
        <dbReference type="ChEBI" id="CHEBI:15377"/>
        <dbReference type="ChEBI" id="CHEBI:16522"/>
        <dbReference type="ChEBI" id="CHEBI:78346"/>
        <dbReference type="ChEBI" id="CHEBI:87947"/>
        <dbReference type="EC" id="3.2.2.n1"/>
    </reaction>
</comment>
<comment type="tissue specificity">
    <text evidence="3">Expressed in roots, leaves, stems, tiller buds, shoot apex, immature inflorescences and flowers.</text>
</comment>
<comment type="similarity">
    <text evidence="4">Belongs to the LOG family.</text>
</comment>
<comment type="sequence caution" evidence="4">
    <conflict type="erroneous initiation">
        <sequence resource="EMBL-CDS" id="CAE05626"/>
    </conflict>
    <text>Truncated N-terminus.</text>
</comment>
<comment type="sequence caution" evidence="4">
    <conflict type="erroneous initiation">
        <sequence resource="EMBL-CDS" id="EEE61351"/>
    </conflict>
    <text>Truncated N-terminus.</text>
</comment>
<gene>
    <name type="primary">LOGL6</name>
    <name type="ordered locus">Os04g0518800</name>
    <name type="ordered locus">LOC_Os04g43840</name>
    <name type="ORF">OsJ_15484</name>
    <name type="ORF">OSJNBb0061C13.8</name>
</gene>
<evidence type="ECO:0000250" key="1"/>
<evidence type="ECO:0000250" key="2">
    <source>
        <dbReference type="UniProtKB" id="B2HS63"/>
    </source>
</evidence>
<evidence type="ECO:0000269" key="3">
    <source>
    </source>
</evidence>
<evidence type="ECO:0000305" key="4"/>
<proteinExistence type="evidence at transcript level"/>
<name>LOGL6_ORYSJ</name>
<dbReference type="EC" id="3.2.2.n1"/>
<dbReference type="EMBL" id="AL731629">
    <property type="protein sequence ID" value="CAE05626.1"/>
    <property type="status" value="ALT_INIT"/>
    <property type="molecule type" value="Genomic_DNA"/>
</dbReference>
<dbReference type="EMBL" id="AP008210">
    <property type="protein sequence ID" value="BAF15242.1"/>
    <property type="molecule type" value="Genomic_DNA"/>
</dbReference>
<dbReference type="EMBL" id="AP014960">
    <property type="protein sequence ID" value="BAS90109.1"/>
    <property type="molecule type" value="Genomic_DNA"/>
</dbReference>
<dbReference type="EMBL" id="CM000141">
    <property type="protein sequence ID" value="EEE61351.1"/>
    <property type="status" value="ALT_INIT"/>
    <property type="molecule type" value="Genomic_DNA"/>
</dbReference>
<dbReference type="RefSeq" id="XP_015634464.1">
    <property type="nucleotide sequence ID" value="XM_015778978.1"/>
</dbReference>
<dbReference type="SMR" id="Q0JBP5"/>
<dbReference type="FunCoup" id="Q0JBP5">
    <property type="interactions" value="22"/>
</dbReference>
<dbReference type="STRING" id="39947.Q0JBP5"/>
<dbReference type="PaxDb" id="39947-Q0JBP5"/>
<dbReference type="EnsemblPlants" id="Os04t0518800-01">
    <property type="protein sequence ID" value="Os04t0518800-01"/>
    <property type="gene ID" value="Os04g0518800"/>
</dbReference>
<dbReference type="Gramene" id="Os04t0518800-01">
    <property type="protein sequence ID" value="Os04t0518800-01"/>
    <property type="gene ID" value="Os04g0518800"/>
</dbReference>
<dbReference type="KEGG" id="dosa:Os04g0518800"/>
<dbReference type="eggNOG" id="ENOG502QSR9">
    <property type="taxonomic scope" value="Eukaryota"/>
</dbReference>
<dbReference type="HOGENOM" id="CLU_058336_2_0_1"/>
<dbReference type="InParanoid" id="Q0JBP5"/>
<dbReference type="OMA" id="MDELWEA"/>
<dbReference type="OrthoDB" id="414463at2759"/>
<dbReference type="Proteomes" id="UP000000763">
    <property type="component" value="Chromosome 4"/>
</dbReference>
<dbReference type="Proteomes" id="UP000007752">
    <property type="component" value="Chromosome 4"/>
</dbReference>
<dbReference type="Proteomes" id="UP000059680">
    <property type="component" value="Chromosome 4"/>
</dbReference>
<dbReference type="GO" id="GO:0005829">
    <property type="term" value="C:cytosol"/>
    <property type="evidence" value="ECO:0000318"/>
    <property type="project" value="GO_Central"/>
</dbReference>
<dbReference type="GO" id="GO:0005634">
    <property type="term" value="C:nucleus"/>
    <property type="evidence" value="ECO:0000318"/>
    <property type="project" value="GO_Central"/>
</dbReference>
<dbReference type="GO" id="GO:0102682">
    <property type="term" value="F:cytokinin riboside 5'-monophosphate phosphoribohydrolase activity"/>
    <property type="evidence" value="ECO:0000318"/>
    <property type="project" value="GO_Central"/>
</dbReference>
<dbReference type="GO" id="GO:0009691">
    <property type="term" value="P:cytokinin biosynthetic process"/>
    <property type="evidence" value="ECO:0000318"/>
    <property type="project" value="GO_Central"/>
</dbReference>
<dbReference type="FunFam" id="3.40.50.450:FF:000005">
    <property type="entry name" value="CASP-like protein"/>
    <property type="match status" value="1"/>
</dbReference>
<dbReference type="Gene3D" id="3.40.50.450">
    <property type="match status" value="1"/>
</dbReference>
<dbReference type="InterPro" id="IPR005269">
    <property type="entry name" value="LOG"/>
</dbReference>
<dbReference type="InterPro" id="IPR031100">
    <property type="entry name" value="LOG_fam"/>
</dbReference>
<dbReference type="NCBIfam" id="TIGR00730">
    <property type="entry name" value="Rossman fold protein, TIGR00730 family"/>
    <property type="match status" value="1"/>
</dbReference>
<dbReference type="PANTHER" id="PTHR31223:SF90">
    <property type="entry name" value="CYTOKININ RIBOSIDE 5'-MONOPHOSPHATE PHOSPHORIBOHYDROLASE LOG6-RELATED"/>
    <property type="match status" value="1"/>
</dbReference>
<dbReference type="PANTHER" id="PTHR31223">
    <property type="entry name" value="LOG FAMILY PROTEIN YJL055W"/>
    <property type="match status" value="1"/>
</dbReference>
<dbReference type="Pfam" id="PF03641">
    <property type="entry name" value="Lysine_decarbox"/>
    <property type="match status" value="1"/>
</dbReference>
<dbReference type="SUPFAM" id="SSF102405">
    <property type="entry name" value="MCP/YpsA-like"/>
    <property type="match status" value="1"/>
</dbReference>